<feature type="chain" id="PRO_1000081852" description="Asparagine--tRNA ligase">
    <location>
        <begin position="1"/>
        <end position="430"/>
    </location>
</feature>
<reference key="1">
    <citation type="journal article" date="2008" name="Genome Res.">
        <title>The genome of Pelotomaculum thermopropionicum reveals niche-associated evolution in anaerobic microbiota.</title>
        <authorList>
            <person name="Kosaka T."/>
            <person name="Kato S."/>
            <person name="Shimoyama T."/>
            <person name="Ishii S."/>
            <person name="Abe T."/>
            <person name="Watanabe K."/>
        </authorList>
    </citation>
    <scope>NUCLEOTIDE SEQUENCE [LARGE SCALE GENOMIC DNA]</scope>
    <source>
        <strain>DSM 13744 / JCM 10971 / SI</strain>
    </source>
</reference>
<sequence>MEKVLIKHLGNYAGQEVLIKGWLYNKRSSGKICFLIVRDGTGLVQGVVEKKAAGEDLFSLAGNITQESSLMLRGTVREEPRAPGGFEIQVTGLEIVHMAEPYPISLKEHGVDFLAERRHLWIRTPRQSAILRIRSELEKGCRDFFEERDFVLADAPIITPTACEGTTNLFEIDYHGEKAYLSQSGQLYNEATAMALGRVYCFGPTFRAEKSKTRRHLMEFWMVEAEAAFFDFEDNIRLQEELVSYLVRRVLENNKKELELLRRDTGRLTGVTPPFPRMSYTDAVDFLNSKGVDFKWGDDFGAPHETMISEHFGLPVFIHRFPVDIKAFYMKPDPENPDVVLGADLLAPEGYGEIIGGGQRIDELELLKKRLVQHKLPEEAFEWYLDLRRYGSVPHSGFGLGLERLLAWICGIEHIREAIPFPRMLYRMCP</sequence>
<accession>A5D2C2</accession>
<dbReference type="EC" id="6.1.1.22" evidence="1"/>
<dbReference type="EMBL" id="AP009389">
    <property type="protein sequence ID" value="BAF59601.1"/>
    <property type="molecule type" value="Genomic_DNA"/>
</dbReference>
<dbReference type="SMR" id="A5D2C2"/>
<dbReference type="STRING" id="370438.PTH_1420"/>
<dbReference type="KEGG" id="pth:PTH_1420"/>
<dbReference type="eggNOG" id="COG0017">
    <property type="taxonomic scope" value="Bacteria"/>
</dbReference>
<dbReference type="HOGENOM" id="CLU_004553_2_0_9"/>
<dbReference type="Proteomes" id="UP000006556">
    <property type="component" value="Chromosome"/>
</dbReference>
<dbReference type="GO" id="GO:0005737">
    <property type="term" value="C:cytoplasm"/>
    <property type="evidence" value="ECO:0007669"/>
    <property type="project" value="UniProtKB-SubCell"/>
</dbReference>
<dbReference type="GO" id="GO:0004816">
    <property type="term" value="F:asparagine-tRNA ligase activity"/>
    <property type="evidence" value="ECO:0007669"/>
    <property type="project" value="UniProtKB-UniRule"/>
</dbReference>
<dbReference type="GO" id="GO:0005524">
    <property type="term" value="F:ATP binding"/>
    <property type="evidence" value="ECO:0007669"/>
    <property type="project" value="UniProtKB-UniRule"/>
</dbReference>
<dbReference type="GO" id="GO:0140096">
    <property type="term" value="F:catalytic activity, acting on a protein"/>
    <property type="evidence" value="ECO:0007669"/>
    <property type="project" value="UniProtKB-ARBA"/>
</dbReference>
<dbReference type="GO" id="GO:0003676">
    <property type="term" value="F:nucleic acid binding"/>
    <property type="evidence" value="ECO:0007669"/>
    <property type="project" value="InterPro"/>
</dbReference>
<dbReference type="GO" id="GO:0016740">
    <property type="term" value="F:transferase activity"/>
    <property type="evidence" value="ECO:0007669"/>
    <property type="project" value="UniProtKB-ARBA"/>
</dbReference>
<dbReference type="GO" id="GO:0006421">
    <property type="term" value="P:asparaginyl-tRNA aminoacylation"/>
    <property type="evidence" value="ECO:0007669"/>
    <property type="project" value="UniProtKB-UniRule"/>
</dbReference>
<dbReference type="CDD" id="cd04323">
    <property type="entry name" value="AsnRS_cyto_like_N"/>
    <property type="match status" value="1"/>
</dbReference>
<dbReference type="CDD" id="cd00776">
    <property type="entry name" value="AsxRS_core"/>
    <property type="match status" value="1"/>
</dbReference>
<dbReference type="Gene3D" id="3.30.930.10">
    <property type="entry name" value="Bira Bifunctional Protein, Domain 2"/>
    <property type="match status" value="1"/>
</dbReference>
<dbReference type="Gene3D" id="2.40.50.140">
    <property type="entry name" value="Nucleic acid-binding proteins"/>
    <property type="match status" value="1"/>
</dbReference>
<dbReference type="HAMAP" id="MF_00534">
    <property type="entry name" value="Asn_tRNA_synth"/>
    <property type="match status" value="1"/>
</dbReference>
<dbReference type="InterPro" id="IPR004364">
    <property type="entry name" value="Aa-tRNA-synt_II"/>
</dbReference>
<dbReference type="InterPro" id="IPR006195">
    <property type="entry name" value="aa-tRNA-synth_II"/>
</dbReference>
<dbReference type="InterPro" id="IPR045864">
    <property type="entry name" value="aa-tRNA-synth_II/BPL/LPL"/>
</dbReference>
<dbReference type="InterPro" id="IPR004522">
    <property type="entry name" value="Asn-tRNA-ligase"/>
</dbReference>
<dbReference type="InterPro" id="IPR002312">
    <property type="entry name" value="Asp/Asn-tRNA-synth_IIb"/>
</dbReference>
<dbReference type="InterPro" id="IPR012340">
    <property type="entry name" value="NA-bd_OB-fold"/>
</dbReference>
<dbReference type="InterPro" id="IPR004365">
    <property type="entry name" value="NA-bd_OB_tRNA"/>
</dbReference>
<dbReference type="NCBIfam" id="TIGR00457">
    <property type="entry name" value="asnS"/>
    <property type="match status" value="1"/>
</dbReference>
<dbReference type="NCBIfam" id="NF003037">
    <property type="entry name" value="PRK03932.1"/>
    <property type="match status" value="1"/>
</dbReference>
<dbReference type="NCBIfam" id="NF003483">
    <property type="entry name" value="PRK05159.1"/>
    <property type="match status" value="1"/>
</dbReference>
<dbReference type="PANTHER" id="PTHR22594:SF34">
    <property type="entry name" value="ASPARAGINE--TRNA LIGASE, MITOCHONDRIAL-RELATED"/>
    <property type="match status" value="1"/>
</dbReference>
<dbReference type="PANTHER" id="PTHR22594">
    <property type="entry name" value="ASPARTYL/LYSYL-TRNA SYNTHETASE"/>
    <property type="match status" value="1"/>
</dbReference>
<dbReference type="Pfam" id="PF00152">
    <property type="entry name" value="tRNA-synt_2"/>
    <property type="match status" value="1"/>
</dbReference>
<dbReference type="Pfam" id="PF01336">
    <property type="entry name" value="tRNA_anti-codon"/>
    <property type="match status" value="1"/>
</dbReference>
<dbReference type="PRINTS" id="PR01042">
    <property type="entry name" value="TRNASYNTHASP"/>
</dbReference>
<dbReference type="SUPFAM" id="SSF55681">
    <property type="entry name" value="Class II aaRS and biotin synthetases"/>
    <property type="match status" value="1"/>
</dbReference>
<dbReference type="SUPFAM" id="SSF50249">
    <property type="entry name" value="Nucleic acid-binding proteins"/>
    <property type="match status" value="1"/>
</dbReference>
<dbReference type="PROSITE" id="PS50862">
    <property type="entry name" value="AA_TRNA_LIGASE_II"/>
    <property type="match status" value="1"/>
</dbReference>
<gene>
    <name evidence="1" type="primary">asnS</name>
    <name type="ordered locus">PTH_1420</name>
</gene>
<organism>
    <name type="scientific">Pelotomaculum thermopropionicum (strain DSM 13744 / JCM 10971 / SI)</name>
    <dbReference type="NCBI Taxonomy" id="370438"/>
    <lineage>
        <taxon>Bacteria</taxon>
        <taxon>Bacillati</taxon>
        <taxon>Bacillota</taxon>
        <taxon>Clostridia</taxon>
        <taxon>Eubacteriales</taxon>
        <taxon>Desulfotomaculaceae</taxon>
        <taxon>Pelotomaculum</taxon>
    </lineage>
</organism>
<proteinExistence type="inferred from homology"/>
<evidence type="ECO:0000255" key="1">
    <source>
        <dbReference type="HAMAP-Rule" id="MF_00534"/>
    </source>
</evidence>
<name>SYN_PELTS</name>
<protein>
    <recommendedName>
        <fullName evidence="1">Asparagine--tRNA ligase</fullName>
        <ecNumber evidence="1">6.1.1.22</ecNumber>
    </recommendedName>
    <alternativeName>
        <fullName evidence="1">Asparaginyl-tRNA synthetase</fullName>
        <shortName evidence="1">AsnRS</shortName>
    </alternativeName>
</protein>
<comment type="catalytic activity">
    <reaction evidence="1">
        <text>tRNA(Asn) + L-asparagine + ATP = L-asparaginyl-tRNA(Asn) + AMP + diphosphate + H(+)</text>
        <dbReference type="Rhea" id="RHEA:11180"/>
        <dbReference type="Rhea" id="RHEA-COMP:9659"/>
        <dbReference type="Rhea" id="RHEA-COMP:9674"/>
        <dbReference type="ChEBI" id="CHEBI:15378"/>
        <dbReference type="ChEBI" id="CHEBI:30616"/>
        <dbReference type="ChEBI" id="CHEBI:33019"/>
        <dbReference type="ChEBI" id="CHEBI:58048"/>
        <dbReference type="ChEBI" id="CHEBI:78442"/>
        <dbReference type="ChEBI" id="CHEBI:78515"/>
        <dbReference type="ChEBI" id="CHEBI:456215"/>
        <dbReference type="EC" id="6.1.1.22"/>
    </reaction>
</comment>
<comment type="subunit">
    <text evidence="1">Homodimer.</text>
</comment>
<comment type="subcellular location">
    <subcellularLocation>
        <location evidence="1">Cytoplasm</location>
    </subcellularLocation>
</comment>
<comment type="similarity">
    <text evidence="1">Belongs to the class-II aminoacyl-tRNA synthetase family.</text>
</comment>
<keyword id="KW-0030">Aminoacyl-tRNA synthetase</keyword>
<keyword id="KW-0067">ATP-binding</keyword>
<keyword id="KW-0963">Cytoplasm</keyword>
<keyword id="KW-0436">Ligase</keyword>
<keyword id="KW-0547">Nucleotide-binding</keyword>
<keyword id="KW-0648">Protein biosynthesis</keyword>
<keyword id="KW-1185">Reference proteome</keyword>